<reference key="1">
    <citation type="journal article" date="2002" name="Nucleic Acids Res.">
        <title>Genome sequence of Oceanobacillus iheyensis isolated from the Iheya Ridge and its unexpected adaptive capabilities to extreme environments.</title>
        <authorList>
            <person name="Takami H."/>
            <person name="Takaki Y."/>
            <person name="Uchiyama I."/>
        </authorList>
    </citation>
    <scope>NUCLEOTIDE SEQUENCE [LARGE SCALE GENOMIC DNA]</scope>
    <source>
        <strain>DSM 14371 / CIP 107618 / JCM 11309 / KCTC 3954 / HTE831</strain>
    </source>
</reference>
<gene>
    <name evidence="1" type="primary">rpsG</name>
    <name type="ordered locus">OB0115</name>
</gene>
<name>RS7_OCEIH</name>
<organism>
    <name type="scientific">Oceanobacillus iheyensis (strain DSM 14371 / CIP 107618 / JCM 11309 / KCTC 3954 / HTE831)</name>
    <dbReference type="NCBI Taxonomy" id="221109"/>
    <lineage>
        <taxon>Bacteria</taxon>
        <taxon>Bacillati</taxon>
        <taxon>Bacillota</taxon>
        <taxon>Bacilli</taxon>
        <taxon>Bacillales</taxon>
        <taxon>Bacillaceae</taxon>
        <taxon>Oceanobacillus</taxon>
    </lineage>
</organism>
<proteinExistence type="inferred from homology"/>
<protein>
    <recommendedName>
        <fullName evidence="1">Small ribosomal subunit protein uS7</fullName>
    </recommendedName>
    <alternativeName>
        <fullName evidence="2">30S ribosomal protein S7</fullName>
    </alternativeName>
</protein>
<accession>Q8ETY6</accession>
<comment type="function">
    <text evidence="1">One of the primary rRNA binding proteins, it binds directly to 16S rRNA where it nucleates assembly of the head domain of the 30S subunit. Is located at the subunit interface close to the decoding center, probably blocks exit of the E-site tRNA.</text>
</comment>
<comment type="subunit">
    <text evidence="1">Part of the 30S ribosomal subunit. Contacts proteins S9 and S11.</text>
</comment>
<comment type="similarity">
    <text evidence="1">Belongs to the universal ribosomal protein uS7 family.</text>
</comment>
<evidence type="ECO:0000255" key="1">
    <source>
        <dbReference type="HAMAP-Rule" id="MF_00480"/>
    </source>
</evidence>
<evidence type="ECO:0000305" key="2"/>
<keyword id="KW-1185">Reference proteome</keyword>
<keyword id="KW-0687">Ribonucleoprotein</keyword>
<keyword id="KW-0689">Ribosomal protein</keyword>
<keyword id="KW-0694">RNA-binding</keyword>
<keyword id="KW-0699">rRNA-binding</keyword>
<keyword id="KW-0820">tRNA-binding</keyword>
<sequence length="156" mass="17968">MPRKGPVPKRDVLPDPLYKSKLVTRLINQIMVDGKRGKAQKILYNAFELVAERSGQNAMEVFEQAMKNVMPVLEVRARRVGGSNYQVPVEVRPERRQALGLRYIVNYSRLRGEKTMEERLANEILDASNNTGAAVKRREDMHKMAEANKAFAHYRW</sequence>
<feature type="chain" id="PRO_0000124311" description="Small ribosomal subunit protein uS7">
    <location>
        <begin position="1"/>
        <end position="156"/>
    </location>
</feature>
<dbReference type="EMBL" id="BA000028">
    <property type="protein sequence ID" value="BAC12071.1"/>
    <property type="molecule type" value="Genomic_DNA"/>
</dbReference>
<dbReference type="RefSeq" id="WP_011064518.1">
    <property type="nucleotide sequence ID" value="NC_004193.1"/>
</dbReference>
<dbReference type="SMR" id="Q8ETY6"/>
<dbReference type="STRING" id="221109.gene:10732305"/>
<dbReference type="KEGG" id="oih:OB0115"/>
<dbReference type="eggNOG" id="COG0049">
    <property type="taxonomic scope" value="Bacteria"/>
</dbReference>
<dbReference type="HOGENOM" id="CLU_072226_1_1_9"/>
<dbReference type="OrthoDB" id="9807653at2"/>
<dbReference type="PhylomeDB" id="Q8ETY6"/>
<dbReference type="Proteomes" id="UP000000822">
    <property type="component" value="Chromosome"/>
</dbReference>
<dbReference type="GO" id="GO:0015935">
    <property type="term" value="C:small ribosomal subunit"/>
    <property type="evidence" value="ECO:0007669"/>
    <property type="project" value="InterPro"/>
</dbReference>
<dbReference type="GO" id="GO:0019843">
    <property type="term" value="F:rRNA binding"/>
    <property type="evidence" value="ECO:0007669"/>
    <property type="project" value="UniProtKB-UniRule"/>
</dbReference>
<dbReference type="GO" id="GO:0003735">
    <property type="term" value="F:structural constituent of ribosome"/>
    <property type="evidence" value="ECO:0007669"/>
    <property type="project" value="InterPro"/>
</dbReference>
<dbReference type="GO" id="GO:0000049">
    <property type="term" value="F:tRNA binding"/>
    <property type="evidence" value="ECO:0007669"/>
    <property type="project" value="UniProtKB-UniRule"/>
</dbReference>
<dbReference type="GO" id="GO:0006412">
    <property type="term" value="P:translation"/>
    <property type="evidence" value="ECO:0007669"/>
    <property type="project" value="UniProtKB-UniRule"/>
</dbReference>
<dbReference type="CDD" id="cd14869">
    <property type="entry name" value="uS7_Bacteria"/>
    <property type="match status" value="1"/>
</dbReference>
<dbReference type="FunFam" id="1.10.455.10:FF:000001">
    <property type="entry name" value="30S ribosomal protein S7"/>
    <property type="match status" value="1"/>
</dbReference>
<dbReference type="Gene3D" id="1.10.455.10">
    <property type="entry name" value="Ribosomal protein S7 domain"/>
    <property type="match status" value="1"/>
</dbReference>
<dbReference type="HAMAP" id="MF_00480_B">
    <property type="entry name" value="Ribosomal_uS7_B"/>
    <property type="match status" value="1"/>
</dbReference>
<dbReference type="InterPro" id="IPR000235">
    <property type="entry name" value="Ribosomal_uS7"/>
</dbReference>
<dbReference type="InterPro" id="IPR005717">
    <property type="entry name" value="Ribosomal_uS7_bac/org-type"/>
</dbReference>
<dbReference type="InterPro" id="IPR020606">
    <property type="entry name" value="Ribosomal_uS7_CS"/>
</dbReference>
<dbReference type="InterPro" id="IPR023798">
    <property type="entry name" value="Ribosomal_uS7_dom"/>
</dbReference>
<dbReference type="InterPro" id="IPR036823">
    <property type="entry name" value="Ribosomal_uS7_dom_sf"/>
</dbReference>
<dbReference type="NCBIfam" id="TIGR01029">
    <property type="entry name" value="rpsG_bact"/>
    <property type="match status" value="1"/>
</dbReference>
<dbReference type="PANTHER" id="PTHR11205">
    <property type="entry name" value="RIBOSOMAL PROTEIN S7"/>
    <property type="match status" value="1"/>
</dbReference>
<dbReference type="Pfam" id="PF00177">
    <property type="entry name" value="Ribosomal_S7"/>
    <property type="match status" value="1"/>
</dbReference>
<dbReference type="PIRSF" id="PIRSF002122">
    <property type="entry name" value="RPS7p_RPS7a_RPS5e_RPS7o"/>
    <property type="match status" value="1"/>
</dbReference>
<dbReference type="SUPFAM" id="SSF47973">
    <property type="entry name" value="Ribosomal protein S7"/>
    <property type="match status" value="1"/>
</dbReference>
<dbReference type="PROSITE" id="PS00052">
    <property type="entry name" value="RIBOSOMAL_S7"/>
    <property type="match status" value="1"/>
</dbReference>